<sequence length="275" mass="30229">MGIRLYRAYTPGTRFRSVSEFTDITRSKPEKSLTYGRHRSQGRNNRGIITSRHRGGGHKRLSREIDFRRDKVGIPARVATIEYDPNRNCRIALLNYQDGEKRYVLHPRGLMVGEEIIAGPDAPLQLGNALPLSKIPLGTGIHNIEVSPGQGGKLVRAAGGVAQLVAKEGSYVTVRLPSGEVRLVLKECSATIGQVGNVDASNVTIGKAGRKRWLGQRPKVRGVVMNPVDHPHGGGEGRAPIGRSKPVTPWGHPALGKRTRKRNKYSNALIIRRRK</sequence>
<proteinExistence type="inferred from homology"/>
<gene>
    <name type="primary">rpl2</name>
</gene>
<comment type="subunit">
    <text evidence="1">Part of the 50S ribosomal subunit.</text>
</comment>
<comment type="subcellular location">
    <subcellularLocation>
        <location>Plastid</location>
        <location>Chloroplast</location>
    </subcellularLocation>
</comment>
<comment type="similarity">
    <text evidence="4">Belongs to the universal ribosomal protein uL2 family.</text>
</comment>
<organism>
    <name type="scientific">Chlorokybus atmophyticus</name>
    <name type="common">Soil alga</name>
    <dbReference type="NCBI Taxonomy" id="3144"/>
    <lineage>
        <taxon>Eukaryota</taxon>
        <taxon>Viridiplantae</taxon>
        <taxon>Streptophyta</taxon>
        <taxon>Chlorokybophyceae</taxon>
        <taxon>Chlorokybales</taxon>
        <taxon>Chlorokybaceae</taxon>
        <taxon>Chlorokybus</taxon>
    </lineage>
</organism>
<accession>Q19VA8</accession>
<feature type="chain" id="PRO_0000310070" description="Large ribosomal subunit protein uL2c">
    <location>
        <begin position="1"/>
        <end position="275"/>
    </location>
</feature>
<feature type="region of interest" description="Disordered" evidence="3">
    <location>
        <begin position="29"/>
        <end position="60"/>
    </location>
</feature>
<feature type="region of interest" description="Disordered" evidence="3">
    <location>
        <begin position="225"/>
        <end position="252"/>
    </location>
</feature>
<feature type="compositionally biased region" description="Basic residues" evidence="3">
    <location>
        <begin position="51"/>
        <end position="60"/>
    </location>
</feature>
<protein>
    <recommendedName>
        <fullName evidence="2">Large ribosomal subunit protein uL2c</fullName>
    </recommendedName>
    <alternativeName>
        <fullName evidence="4">50S ribosomal protein L2, chloroplastic</fullName>
    </alternativeName>
</protein>
<dbReference type="EMBL" id="DQ422812">
    <property type="protein sequence ID" value="ABD62231.2"/>
    <property type="molecule type" value="Genomic_DNA"/>
</dbReference>
<dbReference type="RefSeq" id="YP_001019092.1">
    <property type="nucleotide sequence ID" value="NC_008822.1"/>
</dbReference>
<dbReference type="SMR" id="Q19VA8"/>
<dbReference type="GeneID" id="4783283"/>
<dbReference type="GO" id="GO:0009507">
    <property type="term" value="C:chloroplast"/>
    <property type="evidence" value="ECO:0007669"/>
    <property type="project" value="UniProtKB-SubCell"/>
</dbReference>
<dbReference type="GO" id="GO:0005762">
    <property type="term" value="C:mitochondrial large ribosomal subunit"/>
    <property type="evidence" value="ECO:0007669"/>
    <property type="project" value="TreeGrafter"/>
</dbReference>
<dbReference type="GO" id="GO:0019843">
    <property type="term" value="F:rRNA binding"/>
    <property type="evidence" value="ECO:0007669"/>
    <property type="project" value="UniProtKB-UniRule"/>
</dbReference>
<dbReference type="GO" id="GO:0003735">
    <property type="term" value="F:structural constituent of ribosome"/>
    <property type="evidence" value="ECO:0007669"/>
    <property type="project" value="InterPro"/>
</dbReference>
<dbReference type="GO" id="GO:0016740">
    <property type="term" value="F:transferase activity"/>
    <property type="evidence" value="ECO:0007669"/>
    <property type="project" value="InterPro"/>
</dbReference>
<dbReference type="GO" id="GO:0032543">
    <property type="term" value="P:mitochondrial translation"/>
    <property type="evidence" value="ECO:0007669"/>
    <property type="project" value="TreeGrafter"/>
</dbReference>
<dbReference type="FunFam" id="2.30.30.30:FF:000001">
    <property type="entry name" value="50S ribosomal protein L2"/>
    <property type="match status" value="1"/>
</dbReference>
<dbReference type="FunFam" id="2.40.50.140:FF:000003">
    <property type="entry name" value="50S ribosomal protein L2"/>
    <property type="match status" value="1"/>
</dbReference>
<dbReference type="FunFam" id="4.10.950.10:FF:000001">
    <property type="entry name" value="50S ribosomal protein L2"/>
    <property type="match status" value="1"/>
</dbReference>
<dbReference type="Gene3D" id="2.30.30.30">
    <property type="match status" value="1"/>
</dbReference>
<dbReference type="Gene3D" id="2.40.50.140">
    <property type="entry name" value="Nucleic acid-binding proteins"/>
    <property type="match status" value="1"/>
</dbReference>
<dbReference type="Gene3D" id="4.10.950.10">
    <property type="entry name" value="Ribosomal protein L2, domain 3"/>
    <property type="match status" value="1"/>
</dbReference>
<dbReference type="HAMAP" id="MF_01320_B">
    <property type="entry name" value="Ribosomal_uL2_B"/>
    <property type="match status" value="1"/>
</dbReference>
<dbReference type="InterPro" id="IPR012340">
    <property type="entry name" value="NA-bd_OB-fold"/>
</dbReference>
<dbReference type="InterPro" id="IPR014722">
    <property type="entry name" value="Rib_uL2_dom2"/>
</dbReference>
<dbReference type="InterPro" id="IPR002171">
    <property type="entry name" value="Ribosomal_uL2"/>
</dbReference>
<dbReference type="InterPro" id="IPR005880">
    <property type="entry name" value="Ribosomal_uL2_bac/org-type"/>
</dbReference>
<dbReference type="InterPro" id="IPR022669">
    <property type="entry name" value="Ribosomal_uL2_C"/>
</dbReference>
<dbReference type="InterPro" id="IPR022671">
    <property type="entry name" value="Ribosomal_uL2_CS"/>
</dbReference>
<dbReference type="InterPro" id="IPR014726">
    <property type="entry name" value="Ribosomal_uL2_dom3"/>
</dbReference>
<dbReference type="InterPro" id="IPR022666">
    <property type="entry name" value="Ribosomal_uL2_RNA-bd_dom"/>
</dbReference>
<dbReference type="InterPro" id="IPR008991">
    <property type="entry name" value="Translation_prot_SH3-like_sf"/>
</dbReference>
<dbReference type="NCBIfam" id="TIGR01171">
    <property type="entry name" value="rplB_bact"/>
    <property type="match status" value="1"/>
</dbReference>
<dbReference type="PANTHER" id="PTHR13691:SF5">
    <property type="entry name" value="LARGE RIBOSOMAL SUBUNIT PROTEIN UL2M"/>
    <property type="match status" value="1"/>
</dbReference>
<dbReference type="PANTHER" id="PTHR13691">
    <property type="entry name" value="RIBOSOMAL PROTEIN L2"/>
    <property type="match status" value="1"/>
</dbReference>
<dbReference type="Pfam" id="PF00181">
    <property type="entry name" value="Ribosomal_L2"/>
    <property type="match status" value="1"/>
</dbReference>
<dbReference type="Pfam" id="PF03947">
    <property type="entry name" value="Ribosomal_L2_C"/>
    <property type="match status" value="1"/>
</dbReference>
<dbReference type="PIRSF" id="PIRSF002158">
    <property type="entry name" value="Ribosomal_L2"/>
    <property type="match status" value="1"/>
</dbReference>
<dbReference type="SMART" id="SM01383">
    <property type="entry name" value="Ribosomal_L2"/>
    <property type="match status" value="1"/>
</dbReference>
<dbReference type="SMART" id="SM01382">
    <property type="entry name" value="Ribosomal_L2_C"/>
    <property type="match status" value="1"/>
</dbReference>
<dbReference type="SUPFAM" id="SSF50249">
    <property type="entry name" value="Nucleic acid-binding proteins"/>
    <property type="match status" value="1"/>
</dbReference>
<dbReference type="SUPFAM" id="SSF50104">
    <property type="entry name" value="Translation proteins SH3-like domain"/>
    <property type="match status" value="1"/>
</dbReference>
<dbReference type="PROSITE" id="PS00467">
    <property type="entry name" value="RIBOSOMAL_L2"/>
    <property type="match status" value="1"/>
</dbReference>
<evidence type="ECO:0000250" key="1"/>
<evidence type="ECO:0000255" key="2">
    <source>
        <dbReference type="HAMAP-Rule" id="MF_01320"/>
    </source>
</evidence>
<evidence type="ECO:0000256" key="3">
    <source>
        <dbReference type="SAM" id="MobiDB-lite"/>
    </source>
</evidence>
<evidence type="ECO:0000305" key="4"/>
<geneLocation type="chloroplast"/>
<name>RK2_CHLAT</name>
<reference key="1">
    <citation type="journal article" date="2007" name="BMC Biol.">
        <title>A clade uniting the green algae Mesostigma viride and Chlorokybus atmophyticus represents the deepest branch of the Streptophyta in chloroplast genome-based phylogenies.</title>
        <authorList>
            <person name="Lemieux C."/>
            <person name="Otis C."/>
            <person name="Turmel M."/>
        </authorList>
    </citation>
    <scope>NUCLEOTIDE SEQUENCE [LARGE SCALE GENOMIC DNA]</scope>
    <source>
        <strain>SAG 48.80</strain>
    </source>
</reference>
<keyword id="KW-0150">Chloroplast</keyword>
<keyword id="KW-0934">Plastid</keyword>
<keyword id="KW-0687">Ribonucleoprotein</keyword>
<keyword id="KW-0689">Ribosomal protein</keyword>